<evidence type="ECO:0000250" key="1"/>
<evidence type="ECO:0000255" key="2">
    <source>
        <dbReference type="PROSITE-ProRule" id="PRU01210"/>
    </source>
</evidence>
<evidence type="ECO:0000269" key="3">
    <source>
    </source>
</evidence>
<evidence type="ECO:0000269" key="4">
    <source>
    </source>
</evidence>
<evidence type="ECO:0000303" key="5">
    <source>
    </source>
</evidence>
<evidence type="ECO:0000303" key="6">
    <source>
    </source>
</evidence>
<evidence type="ECO:0000305" key="7"/>
<evidence type="ECO:0000305" key="8">
    <source>
    </source>
</evidence>
<evidence type="ECO:0000305" key="9">
    <source>
    </source>
</evidence>
<comment type="function">
    <text evidence="3 4">Beta toxins bind voltage-independently at site-4 of sodium channels (Nav) and shift the voltage of activation toward more negative potentials thereby affecting sodium channel activation and promoting spontaneous and repetitive firing.</text>
</comment>
<comment type="subcellular location">
    <subcellularLocation>
        <location evidence="3 4">Secreted</location>
    </subcellularLocation>
</comment>
<comment type="tissue specificity">
    <text evidence="8 9">Expressed by the venom gland.</text>
</comment>
<comment type="domain">
    <text evidence="7">Has the structural arrangement of an alpha-helix connected to antiparallel beta-sheets by disulfide bonds (CS-alpha/beta).</text>
</comment>
<comment type="similarity">
    <text evidence="7">Belongs to the long (4 C-C) scorpion toxin superfamily. Sodium channel inhibitor family. Beta subfamily.</text>
</comment>
<feature type="chain" id="PRO_0000066760" description="Beta-toxin Cii1" evidence="4">
    <location>
        <begin position="1"/>
        <end position="66"/>
    </location>
</feature>
<feature type="domain" description="LCN-type CS-alpha/beta" evidence="2">
    <location>
        <begin position="1"/>
        <end position="66"/>
    </location>
</feature>
<feature type="modified residue" description="Asparagine amide" evidence="1">
    <location>
        <position position="66"/>
    </location>
</feature>
<feature type="disulfide bond" evidence="2">
    <location>
        <begin position="12"/>
        <end position="65"/>
    </location>
</feature>
<feature type="disulfide bond" evidence="2">
    <location>
        <begin position="16"/>
        <end position="41"/>
    </location>
</feature>
<feature type="disulfide bond" evidence="2">
    <location>
        <begin position="25"/>
        <end position="46"/>
    </location>
</feature>
<feature type="disulfide bond" evidence="2">
    <location>
        <begin position="29"/>
        <end position="48"/>
    </location>
</feature>
<name>SCX1_CENII</name>
<reference key="1">
    <citation type="journal article" date="1996" name="Comp. Biochem. Physiol.">
        <title>Structural and functional comparison of toxins from the venom of the scorpions Centruroides infamatus infamatus, Centruroides limpidus limpidus and Centruroides noxius.</title>
        <authorList>
            <person name="Dehesa-Davila M."/>
            <person name="Ramirez A.N."/>
            <person name="Zamudio F.Z."/>
            <person name="Gurrola-Briones G."/>
            <person name="Lievano A."/>
            <person name="Darszon A."/>
            <person name="Possani L.D."/>
        </authorList>
    </citation>
    <scope>PROTEIN SEQUENCE</scope>
    <scope>FUNCTION</scope>
    <scope>SUBCELLULAR LOCATION</scope>
    <source>
        <tissue>Venom</tissue>
    </source>
</reference>
<reference key="2">
    <citation type="journal article" date="1994" name="Toxicon">
        <title>Isolation of a toxin from Centruroides infamatus infamatus Koch scorpion venom that modifies Na+ permeability on chick dorsal root ganglion cells.</title>
        <authorList>
            <person name="Dehesa-Davila M."/>
            <person name="Martin B.M."/>
            <person name="Nobile M."/>
            <person name="Prestipino G."/>
            <person name="Possani L.D."/>
        </authorList>
    </citation>
    <scope>PROTEIN SEQUENCE OF 1-48</scope>
    <scope>FUNCTION</scope>
    <scope>SUBCELLULAR LOCATION</scope>
    <source>
        <tissue>Venom</tissue>
    </source>
</reference>
<dbReference type="SMR" id="P59897"/>
<dbReference type="GO" id="GO:0005576">
    <property type="term" value="C:extracellular region"/>
    <property type="evidence" value="ECO:0007669"/>
    <property type="project" value="UniProtKB-SubCell"/>
</dbReference>
<dbReference type="GO" id="GO:0019871">
    <property type="term" value="F:sodium channel inhibitor activity"/>
    <property type="evidence" value="ECO:0007669"/>
    <property type="project" value="InterPro"/>
</dbReference>
<dbReference type="GO" id="GO:0090729">
    <property type="term" value="F:toxin activity"/>
    <property type="evidence" value="ECO:0007669"/>
    <property type="project" value="UniProtKB-KW"/>
</dbReference>
<dbReference type="GO" id="GO:0006952">
    <property type="term" value="P:defense response"/>
    <property type="evidence" value="ECO:0007669"/>
    <property type="project" value="InterPro"/>
</dbReference>
<dbReference type="CDD" id="cd23106">
    <property type="entry name" value="neurotoxins_LC_scorpion"/>
    <property type="match status" value="1"/>
</dbReference>
<dbReference type="FunFam" id="3.30.30.10:FF:000002">
    <property type="entry name" value="Alpha-like toxin BmK-M1"/>
    <property type="match status" value="1"/>
</dbReference>
<dbReference type="Gene3D" id="3.30.30.10">
    <property type="entry name" value="Knottin, scorpion toxin-like"/>
    <property type="match status" value="1"/>
</dbReference>
<dbReference type="InterPro" id="IPR044062">
    <property type="entry name" value="LCN-type_CS_alpha_beta_dom"/>
</dbReference>
<dbReference type="InterPro" id="IPR003614">
    <property type="entry name" value="Scorpion_toxin-like"/>
</dbReference>
<dbReference type="InterPro" id="IPR036574">
    <property type="entry name" value="Scorpion_toxin-like_sf"/>
</dbReference>
<dbReference type="InterPro" id="IPR018218">
    <property type="entry name" value="Scorpion_toxinL"/>
</dbReference>
<dbReference type="PRINTS" id="PR00285">
    <property type="entry name" value="SCORPNTOXIN"/>
</dbReference>
<dbReference type="SMART" id="SM00505">
    <property type="entry name" value="Knot1"/>
    <property type="match status" value="1"/>
</dbReference>
<dbReference type="SUPFAM" id="SSF57095">
    <property type="entry name" value="Scorpion toxin-like"/>
    <property type="match status" value="1"/>
</dbReference>
<dbReference type="PROSITE" id="PS51863">
    <property type="entry name" value="LCN_CSAB"/>
    <property type="match status" value="1"/>
</dbReference>
<keyword id="KW-0027">Amidation</keyword>
<keyword id="KW-0903">Direct protein sequencing</keyword>
<keyword id="KW-1015">Disulfide bond</keyword>
<keyword id="KW-0872">Ion channel impairing toxin</keyword>
<keyword id="KW-0528">Neurotoxin</keyword>
<keyword id="KW-0964">Secreted</keyword>
<keyword id="KW-0800">Toxin</keyword>
<keyword id="KW-0738">Voltage-gated sodium channel impairing toxin</keyword>
<accession>P59897</accession>
<protein>
    <recommendedName>
        <fullName evidence="7">Beta-toxin Cii1</fullName>
        <shortName evidence="6">Cii 1</shortName>
    </recommendedName>
    <alternativeName>
        <fullName evidence="5">Toxin 1</fullName>
    </alternativeName>
</protein>
<proteinExistence type="evidence at protein level"/>
<sequence length="66" mass="7587">KEGYLVNHSTGCKYECYKLGDNDYCLRECKQQYGKGAGGYCYAFGCWCTHLYEQAVVWPLPKKTCN</sequence>
<organism>
    <name type="scientific">Centruroides infamatus</name>
    <name type="common">Kock scorpion</name>
    <dbReference type="NCBI Taxonomy" id="42199"/>
    <lineage>
        <taxon>Eukaryota</taxon>
        <taxon>Metazoa</taxon>
        <taxon>Ecdysozoa</taxon>
        <taxon>Arthropoda</taxon>
        <taxon>Chelicerata</taxon>
        <taxon>Arachnida</taxon>
        <taxon>Scorpiones</taxon>
        <taxon>Buthida</taxon>
        <taxon>Buthoidea</taxon>
        <taxon>Buthidae</taxon>
        <taxon>Centruroides</taxon>
    </lineage>
</organism>